<organism>
    <name type="scientific">Xenopus laevis</name>
    <name type="common">African clawed frog</name>
    <dbReference type="NCBI Taxonomy" id="8355"/>
    <lineage>
        <taxon>Eukaryota</taxon>
        <taxon>Metazoa</taxon>
        <taxon>Chordata</taxon>
        <taxon>Craniata</taxon>
        <taxon>Vertebrata</taxon>
        <taxon>Euteleostomi</taxon>
        <taxon>Amphibia</taxon>
        <taxon>Batrachia</taxon>
        <taxon>Anura</taxon>
        <taxon>Pipoidea</taxon>
        <taxon>Pipidae</taxon>
        <taxon>Xenopodinae</taxon>
        <taxon>Xenopus</taxon>
        <taxon>Xenopus</taxon>
    </lineage>
</organism>
<comment type="function">
    <text evidence="1">Specific and highly efficient GDP-D-glucose phosphorylase regulating the levels of GDP-D-glucose in cells.</text>
</comment>
<comment type="catalytic activity">
    <reaction>
        <text>GDP-alpha-D-glucose + phosphate = alpha-D-glucose 1-phosphate + GDP + H(+)</text>
        <dbReference type="Rhea" id="RHEA:30387"/>
        <dbReference type="ChEBI" id="CHEBI:15378"/>
        <dbReference type="ChEBI" id="CHEBI:43474"/>
        <dbReference type="ChEBI" id="CHEBI:58189"/>
        <dbReference type="ChEBI" id="CHEBI:58601"/>
        <dbReference type="ChEBI" id="CHEBI:62230"/>
        <dbReference type="EC" id="2.7.7.78"/>
    </reaction>
</comment>
<comment type="subcellular location">
    <subcellularLocation>
        <location evidence="1">Cytoplasm</location>
    </subcellularLocation>
</comment>
<comment type="similarity">
    <text evidence="2">Belongs to the GDPGP1 family.</text>
</comment>
<comment type="caution">
    <text evidence="2">The ortholog in A.thaliana catalyzes the first reaction of the Smirnoff-Wheeler pathway, the major route to ascorbate biosynthesis in plants.</text>
</comment>
<name>GDPP1_XENLA</name>
<protein>
    <recommendedName>
        <fullName>GDP-D-glucose phosphorylase 1</fullName>
        <ecNumber>2.7.7.78</ecNumber>
    </recommendedName>
</protein>
<feature type="chain" id="PRO_0000336754" description="GDP-D-glucose phosphorylase 1">
    <location>
        <begin position="1"/>
        <end position="399"/>
    </location>
</feature>
<feature type="active site" description="Tele-GMP-histidine intermediate" evidence="1">
    <location>
        <position position="237"/>
    </location>
</feature>
<keyword id="KW-0963">Cytoplasm</keyword>
<keyword id="KW-0344">Guanine-nucleotide releasing factor</keyword>
<keyword id="KW-0378">Hydrolase</keyword>
<keyword id="KW-0547">Nucleotide-binding</keyword>
<keyword id="KW-0548">Nucleotidyltransferase</keyword>
<keyword id="KW-1185">Reference proteome</keyword>
<keyword id="KW-0808">Transferase</keyword>
<gene>
    <name type="primary">gdpgp1</name>
</gene>
<evidence type="ECO:0000250" key="1"/>
<evidence type="ECO:0000305" key="2"/>
<dbReference type="EC" id="2.7.7.78"/>
<dbReference type="EMBL" id="BC153762">
    <property type="protein sequence ID" value="AAI53763.1"/>
    <property type="molecule type" value="mRNA"/>
</dbReference>
<dbReference type="RefSeq" id="NP_001104198.1">
    <property type="nucleotide sequence ID" value="NM_001110728.1"/>
</dbReference>
<dbReference type="DNASU" id="100126619"/>
<dbReference type="GeneID" id="100126619"/>
<dbReference type="KEGG" id="xla:100126619"/>
<dbReference type="AGR" id="Xenbase:XB-GENE-5867405"/>
<dbReference type="CTD" id="100126619"/>
<dbReference type="Xenbase" id="XB-GENE-5867405">
    <property type="gene designation" value="gdpgp1.S"/>
</dbReference>
<dbReference type="OMA" id="GIQWPRT"/>
<dbReference type="OrthoDB" id="417175at2759"/>
<dbReference type="Proteomes" id="UP000186698">
    <property type="component" value="Chromosome 3S"/>
</dbReference>
<dbReference type="Bgee" id="100126619">
    <property type="expression patterns" value="Expressed in testis and 16 other cell types or tissues"/>
</dbReference>
<dbReference type="GO" id="GO:0005737">
    <property type="term" value="C:cytoplasm"/>
    <property type="evidence" value="ECO:0000250"/>
    <property type="project" value="UniProtKB"/>
</dbReference>
<dbReference type="GO" id="GO:0080048">
    <property type="term" value="F:GDP-D-glucose phosphorylase activity"/>
    <property type="evidence" value="ECO:0000250"/>
    <property type="project" value="UniProtKB"/>
</dbReference>
<dbReference type="GO" id="GO:0005085">
    <property type="term" value="F:guanyl-nucleotide exchange factor activity"/>
    <property type="evidence" value="ECO:0007669"/>
    <property type="project" value="UniProtKB-KW"/>
</dbReference>
<dbReference type="GO" id="GO:0016787">
    <property type="term" value="F:hydrolase activity"/>
    <property type="evidence" value="ECO:0007669"/>
    <property type="project" value="UniProtKB-KW"/>
</dbReference>
<dbReference type="GO" id="GO:0000166">
    <property type="term" value="F:nucleotide binding"/>
    <property type="evidence" value="ECO:0007669"/>
    <property type="project" value="UniProtKB-KW"/>
</dbReference>
<dbReference type="GO" id="GO:0006006">
    <property type="term" value="P:glucose metabolic process"/>
    <property type="evidence" value="ECO:0000250"/>
    <property type="project" value="UniProtKB"/>
</dbReference>
<dbReference type="InterPro" id="IPR026506">
    <property type="entry name" value="GDPGP"/>
</dbReference>
<dbReference type="PANTHER" id="PTHR20884">
    <property type="entry name" value="GDP-D-GLUCOSE PHOSPHORYLASE 1"/>
    <property type="match status" value="1"/>
</dbReference>
<dbReference type="PANTHER" id="PTHR20884:SF8">
    <property type="entry name" value="GDP-D-GLUCOSE PHOSPHORYLASE 1"/>
    <property type="match status" value="1"/>
</dbReference>
<reference key="1">
    <citation type="submission" date="2007-09" db="EMBL/GenBank/DDBJ databases">
        <authorList>
            <consortium name="NIH - Xenopus Gene Collection (XGC) project"/>
        </authorList>
    </citation>
    <scope>NUCLEOTIDE SEQUENCE [LARGE SCALE MRNA]</scope>
    <source>
        <tissue>Spleen</tissue>
    </source>
</reference>
<accession>A8E5Y3</accession>
<sequence length="399" mass="45093">MEEEHINQRPSATVEEYSYSEADFVFSGLSWKERRQYAEDTSFLSPFDKALQSKWEQKMNEGLFRYPLRNLQTKILPGSLSYVAQLNIQRSINRRKPEDIWSIQQKFNPNQFNYNKIKPEEIVFQMIRSETEHCVDSDKVHGSSVNGMGTSDCKSGSTHQRCCILECKGGCTLVVINVSPLEFGHVLFMPDPSLCLPQILTEDLMLFGLESVLLSAHPGFRVGFNSLGGFASVNHLHLHGFYLDHDLFIESSSSKPLCPEMNFHLITHFPAPSFLFYTDGRNLKSTAQNICKVTDFLVAKNIAHNLFITRGSNPDTGNGSEGRNGIRVNIWARKPSFGAKEVSAFNVALCELAGHLPVKNQEDFNSITEDSVIDIIHNCLLADDEFTQLSLDLVEYLRK</sequence>
<proteinExistence type="evidence at transcript level"/>